<dbReference type="EC" id="5.6.1.7" evidence="1"/>
<dbReference type="EMBL" id="CP000607">
    <property type="protein sequence ID" value="ABP36608.1"/>
    <property type="molecule type" value="Genomic_DNA"/>
</dbReference>
<dbReference type="SMR" id="A4SDP9"/>
<dbReference type="STRING" id="290318.Cvib_0586"/>
<dbReference type="KEGG" id="pvi:Cvib_0586"/>
<dbReference type="eggNOG" id="COG0459">
    <property type="taxonomic scope" value="Bacteria"/>
</dbReference>
<dbReference type="HOGENOM" id="CLU_016503_3_0_10"/>
<dbReference type="OrthoDB" id="9766614at2"/>
<dbReference type="GO" id="GO:0005737">
    <property type="term" value="C:cytoplasm"/>
    <property type="evidence" value="ECO:0007669"/>
    <property type="project" value="UniProtKB-SubCell"/>
</dbReference>
<dbReference type="GO" id="GO:0005524">
    <property type="term" value="F:ATP binding"/>
    <property type="evidence" value="ECO:0007669"/>
    <property type="project" value="UniProtKB-UniRule"/>
</dbReference>
<dbReference type="GO" id="GO:0140662">
    <property type="term" value="F:ATP-dependent protein folding chaperone"/>
    <property type="evidence" value="ECO:0007669"/>
    <property type="project" value="InterPro"/>
</dbReference>
<dbReference type="GO" id="GO:0016853">
    <property type="term" value="F:isomerase activity"/>
    <property type="evidence" value="ECO:0007669"/>
    <property type="project" value="UniProtKB-KW"/>
</dbReference>
<dbReference type="GO" id="GO:0051082">
    <property type="term" value="F:unfolded protein binding"/>
    <property type="evidence" value="ECO:0007669"/>
    <property type="project" value="UniProtKB-UniRule"/>
</dbReference>
<dbReference type="GO" id="GO:0042026">
    <property type="term" value="P:protein refolding"/>
    <property type="evidence" value="ECO:0007669"/>
    <property type="project" value="UniProtKB-UniRule"/>
</dbReference>
<dbReference type="CDD" id="cd03344">
    <property type="entry name" value="GroEL"/>
    <property type="match status" value="1"/>
</dbReference>
<dbReference type="FunFam" id="3.50.7.10:FF:000001">
    <property type="entry name" value="60 kDa chaperonin"/>
    <property type="match status" value="1"/>
</dbReference>
<dbReference type="Gene3D" id="3.50.7.10">
    <property type="entry name" value="GroEL"/>
    <property type="match status" value="1"/>
</dbReference>
<dbReference type="Gene3D" id="1.10.560.10">
    <property type="entry name" value="GroEL-like equatorial domain"/>
    <property type="match status" value="1"/>
</dbReference>
<dbReference type="Gene3D" id="3.30.260.10">
    <property type="entry name" value="TCP-1-like chaperonin intermediate domain"/>
    <property type="match status" value="1"/>
</dbReference>
<dbReference type="HAMAP" id="MF_00600">
    <property type="entry name" value="CH60"/>
    <property type="match status" value="1"/>
</dbReference>
<dbReference type="InterPro" id="IPR018370">
    <property type="entry name" value="Chaperonin_Cpn60_CS"/>
</dbReference>
<dbReference type="InterPro" id="IPR001844">
    <property type="entry name" value="Cpn60/GroEL"/>
</dbReference>
<dbReference type="InterPro" id="IPR002423">
    <property type="entry name" value="Cpn60/GroEL/TCP-1"/>
</dbReference>
<dbReference type="InterPro" id="IPR027409">
    <property type="entry name" value="GroEL-like_apical_dom_sf"/>
</dbReference>
<dbReference type="InterPro" id="IPR027413">
    <property type="entry name" value="GROEL-like_equatorial_sf"/>
</dbReference>
<dbReference type="InterPro" id="IPR027410">
    <property type="entry name" value="TCP-1-like_intermed_sf"/>
</dbReference>
<dbReference type="NCBIfam" id="TIGR02348">
    <property type="entry name" value="GroEL"/>
    <property type="match status" value="1"/>
</dbReference>
<dbReference type="NCBIfam" id="NF000592">
    <property type="entry name" value="PRK00013.1"/>
    <property type="match status" value="1"/>
</dbReference>
<dbReference type="NCBIfam" id="NF009487">
    <property type="entry name" value="PRK12849.1"/>
    <property type="match status" value="1"/>
</dbReference>
<dbReference type="NCBIfam" id="NF009488">
    <property type="entry name" value="PRK12850.1"/>
    <property type="match status" value="1"/>
</dbReference>
<dbReference type="NCBIfam" id="NF009489">
    <property type="entry name" value="PRK12851.1"/>
    <property type="match status" value="1"/>
</dbReference>
<dbReference type="PANTHER" id="PTHR45633">
    <property type="entry name" value="60 KDA HEAT SHOCK PROTEIN, MITOCHONDRIAL"/>
    <property type="match status" value="1"/>
</dbReference>
<dbReference type="Pfam" id="PF00118">
    <property type="entry name" value="Cpn60_TCP1"/>
    <property type="match status" value="1"/>
</dbReference>
<dbReference type="PRINTS" id="PR00298">
    <property type="entry name" value="CHAPERONIN60"/>
</dbReference>
<dbReference type="SUPFAM" id="SSF52029">
    <property type="entry name" value="GroEL apical domain-like"/>
    <property type="match status" value="1"/>
</dbReference>
<dbReference type="SUPFAM" id="SSF48592">
    <property type="entry name" value="GroEL equatorial domain-like"/>
    <property type="match status" value="1"/>
</dbReference>
<dbReference type="SUPFAM" id="SSF54849">
    <property type="entry name" value="GroEL-intermediate domain like"/>
    <property type="match status" value="1"/>
</dbReference>
<dbReference type="PROSITE" id="PS00296">
    <property type="entry name" value="CHAPERONINS_CPN60"/>
    <property type="match status" value="1"/>
</dbReference>
<protein>
    <recommendedName>
        <fullName evidence="1">Chaperonin GroEL</fullName>
        <ecNumber evidence="1">5.6.1.7</ecNumber>
    </recommendedName>
    <alternativeName>
        <fullName evidence="1">60 kDa chaperonin</fullName>
    </alternativeName>
    <alternativeName>
        <fullName evidence="1">Chaperonin-60</fullName>
        <shortName evidence="1">Cpn60</shortName>
    </alternativeName>
</protein>
<proteinExistence type="inferred from homology"/>
<gene>
    <name evidence="1" type="primary">groEL</name>
    <name evidence="1" type="synonym">groL</name>
    <name type="ordered locus">Cvib_0586</name>
</gene>
<feature type="chain" id="PRO_1000082483" description="Chaperonin GroEL">
    <location>
        <begin position="1"/>
        <end position="547"/>
    </location>
</feature>
<feature type="region of interest" description="Disordered" evidence="2">
    <location>
        <begin position="527"/>
        <end position="547"/>
    </location>
</feature>
<feature type="compositionally biased region" description="Gly residues" evidence="2">
    <location>
        <begin position="538"/>
        <end position="547"/>
    </location>
</feature>
<feature type="binding site" evidence="1">
    <location>
        <begin position="30"/>
        <end position="33"/>
    </location>
    <ligand>
        <name>ATP</name>
        <dbReference type="ChEBI" id="CHEBI:30616"/>
    </ligand>
</feature>
<feature type="binding site" evidence="1">
    <location>
        <position position="51"/>
    </location>
    <ligand>
        <name>ATP</name>
        <dbReference type="ChEBI" id="CHEBI:30616"/>
    </ligand>
</feature>
<feature type="binding site" evidence="1">
    <location>
        <begin position="87"/>
        <end position="91"/>
    </location>
    <ligand>
        <name>ATP</name>
        <dbReference type="ChEBI" id="CHEBI:30616"/>
    </ligand>
</feature>
<feature type="binding site" evidence="1">
    <location>
        <position position="415"/>
    </location>
    <ligand>
        <name>ATP</name>
        <dbReference type="ChEBI" id="CHEBI:30616"/>
    </ligand>
</feature>
<feature type="binding site" evidence="1">
    <location>
        <position position="496"/>
    </location>
    <ligand>
        <name>ATP</name>
        <dbReference type="ChEBI" id="CHEBI:30616"/>
    </ligand>
</feature>
<sequence>MTAKDILFDADARAKLKVGVDKLANAVKVTLGPAGRNVLIDKKFGAPTSTKDGVTVAKEVELEDAIENMGAQMVREVASKTSDVAGDGTTTATVLAQAIYREGLKNVAAGARPIDLKRGIDRAVKEVVAELRTISRSISGKKEIAQVGTISANNDPEIGELIAEAMDKVGKDGVITVEEAKGMDTELKVVEGMQFDRGYLSPYFVTNSESMEAELDDALILIYDKKISNMKELLPILEKGAQSGRPLLIIAEDIEGEALATLVVNKLRGTLKVCAVKAPGFGDRRKAMLDDIAILTGGTVISEEKGYKLENATINYLGQAARVSLDKDNTTIVEGKGTQEEIKARINEIKGQIDKSTSDYDTEKLQERLAKLSGGVAVLNIGASTEVEMKEKKARVEDALHATRAAVQEGIVVGGGVALIRAIKGLDNAKPDNDDQKTGIEIIRRALEEPLRQIVANTGTTDGAVVLEHVKNGEGDYGFNARTEQYENLVEAGVVDPTKVTRSALENAASVASILLTTEACITDIKENTPDMPAMPPGGMGGMGGMY</sequence>
<name>CH60_CHLPM</name>
<organism>
    <name type="scientific">Chlorobium phaeovibrioides (strain DSM 265 / 1930)</name>
    <name type="common">Prosthecochloris vibrioformis (strain DSM 265)</name>
    <dbReference type="NCBI Taxonomy" id="290318"/>
    <lineage>
        <taxon>Bacteria</taxon>
        <taxon>Pseudomonadati</taxon>
        <taxon>Chlorobiota</taxon>
        <taxon>Chlorobiia</taxon>
        <taxon>Chlorobiales</taxon>
        <taxon>Chlorobiaceae</taxon>
        <taxon>Chlorobium/Pelodictyon group</taxon>
        <taxon>Chlorobium</taxon>
    </lineage>
</organism>
<accession>A4SDP9</accession>
<evidence type="ECO:0000255" key="1">
    <source>
        <dbReference type="HAMAP-Rule" id="MF_00600"/>
    </source>
</evidence>
<evidence type="ECO:0000256" key="2">
    <source>
        <dbReference type="SAM" id="MobiDB-lite"/>
    </source>
</evidence>
<reference key="1">
    <citation type="submission" date="2007-03" db="EMBL/GenBank/DDBJ databases">
        <title>Complete sequence of Prosthecochloris vibrioformis DSM 265.</title>
        <authorList>
            <consortium name="US DOE Joint Genome Institute"/>
            <person name="Copeland A."/>
            <person name="Lucas S."/>
            <person name="Lapidus A."/>
            <person name="Barry K."/>
            <person name="Detter J.C."/>
            <person name="Glavina del Rio T."/>
            <person name="Hammon N."/>
            <person name="Israni S."/>
            <person name="Pitluck S."/>
            <person name="Schmutz J."/>
            <person name="Larimer F."/>
            <person name="Land M."/>
            <person name="Hauser L."/>
            <person name="Mikhailova N."/>
            <person name="Li T."/>
            <person name="Overmann J."/>
            <person name="Schuster S.C."/>
            <person name="Bryant D.A."/>
            <person name="Richardson P."/>
        </authorList>
    </citation>
    <scope>NUCLEOTIDE SEQUENCE [LARGE SCALE GENOMIC DNA]</scope>
    <source>
        <strain>DSM 265 / 1930</strain>
    </source>
</reference>
<keyword id="KW-0067">ATP-binding</keyword>
<keyword id="KW-0143">Chaperone</keyword>
<keyword id="KW-0963">Cytoplasm</keyword>
<keyword id="KW-0413">Isomerase</keyword>
<keyword id="KW-0547">Nucleotide-binding</keyword>
<comment type="function">
    <text evidence="1">Together with its co-chaperonin GroES, plays an essential role in assisting protein folding. The GroEL-GroES system forms a nano-cage that allows encapsulation of the non-native substrate proteins and provides a physical environment optimized to promote and accelerate protein folding.</text>
</comment>
<comment type="catalytic activity">
    <reaction evidence="1">
        <text>ATP + H2O + a folded polypeptide = ADP + phosphate + an unfolded polypeptide.</text>
        <dbReference type="EC" id="5.6.1.7"/>
    </reaction>
</comment>
<comment type="subunit">
    <text evidence="1">Forms a cylinder of 14 subunits composed of two heptameric rings stacked back-to-back. Interacts with the co-chaperonin GroES.</text>
</comment>
<comment type="subcellular location">
    <subcellularLocation>
        <location evidence="1">Cytoplasm</location>
    </subcellularLocation>
</comment>
<comment type="similarity">
    <text evidence="1">Belongs to the chaperonin (HSP60) family.</text>
</comment>